<keyword id="KW-0238">DNA-binding</keyword>
<keyword id="KW-0539">Nucleus</keyword>
<keyword id="KW-0597">Phosphoprotein</keyword>
<keyword id="KW-0656">Proto-oncogene</keyword>
<keyword id="KW-1185">Reference proteome</keyword>
<keyword id="KW-0804">Transcription</keyword>
<keyword id="KW-0805">Transcription regulation</keyword>
<accession>A1A4L6</accession>
<evidence type="ECO:0000250" key="1"/>
<evidence type="ECO:0000250" key="2">
    <source>
        <dbReference type="UniProtKB" id="P15036"/>
    </source>
</evidence>
<evidence type="ECO:0000250" key="3">
    <source>
        <dbReference type="UniProtKB" id="P15037"/>
    </source>
</evidence>
<evidence type="ECO:0000255" key="4">
    <source>
        <dbReference type="PROSITE-ProRule" id="PRU00237"/>
    </source>
</evidence>
<evidence type="ECO:0000255" key="5">
    <source>
        <dbReference type="PROSITE-ProRule" id="PRU00762"/>
    </source>
</evidence>
<evidence type="ECO:0000256" key="6">
    <source>
        <dbReference type="SAM" id="MobiDB-lite"/>
    </source>
</evidence>
<evidence type="ECO:0000305" key="7"/>
<protein>
    <recommendedName>
        <fullName>Protein C-ets-2</fullName>
    </recommendedName>
</protein>
<comment type="function">
    <text evidence="1">Transcription factor activating transcription. Binds specifically the GGA DNA motif in gene promoters and stimulates transcription of those genes (By similarity).</text>
</comment>
<comment type="subcellular location">
    <subcellularLocation>
        <location>Nucleus</location>
    </subcellularLocation>
</comment>
<comment type="PTM">
    <text>Phosphorylation by CDK10 at Ser-225 may create a phosphodegron that targets ETS2 for proteasomal degradation.</text>
</comment>
<comment type="similarity">
    <text evidence="7">Belongs to the ETS family.</text>
</comment>
<reference key="1">
    <citation type="submission" date="2006-10" db="EMBL/GenBank/DDBJ databases">
        <authorList>
            <consortium name="NIH - Mammalian Gene Collection (MGC) project"/>
        </authorList>
    </citation>
    <scope>NUCLEOTIDE SEQUENCE [LARGE SCALE MRNA]</scope>
    <source>
        <strain>Crossbred X Angus</strain>
        <tissue>Ileum</tissue>
    </source>
</reference>
<name>ETS2_BOVIN</name>
<proteinExistence type="evidence at transcript level"/>
<organism>
    <name type="scientific">Bos taurus</name>
    <name type="common">Bovine</name>
    <dbReference type="NCBI Taxonomy" id="9913"/>
    <lineage>
        <taxon>Eukaryota</taxon>
        <taxon>Metazoa</taxon>
        <taxon>Chordata</taxon>
        <taxon>Craniata</taxon>
        <taxon>Vertebrata</taxon>
        <taxon>Euteleostomi</taxon>
        <taxon>Mammalia</taxon>
        <taxon>Eutheria</taxon>
        <taxon>Laurasiatheria</taxon>
        <taxon>Artiodactyla</taxon>
        <taxon>Ruminantia</taxon>
        <taxon>Pecora</taxon>
        <taxon>Bovidae</taxon>
        <taxon>Bovinae</taxon>
        <taxon>Bos</taxon>
    </lineage>
</organism>
<feature type="chain" id="PRO_0000287131" description="Protein C-ets-2">
    <location>
        <begin position="1"/>
        <end position="470"/>
    </location>
</feature>
<feature type="domain" description="PNT" evidence="5">
    <location>
        <begin position="85"/>
        <end position="170"/>
    </location>
</feature>
<feature type="DNA-binding region" description="ETS" evidence="4">
    <location>
        <begin position="364"/>
        <end position="444"/>
    </location>
</feature>
<feature type="region of interest" description="Disordered" evidence="6">
    <location>
        <begin position="270"/>
        <end position="291"/>
    </location>
</feature>
<feature type="modified residue" description="Phosphoserine" evidence="2">
    <location>
        <position position="225"/>
    </location>
</feature>
<feature type="modified residue" description="Phosphoserine" evidence="2">
    <location>
        <position position="296"/>
    </location>
</feature>
<feature type="modified residue" description="Phosphoserine" evidence="3">
    <location>
        <position position="299"/>
    </location>
</feature>
<feature type="modified residue" description="Phosphoserine" evidence="3">
    <location>
        <position position="302"/>
    </location>
</feature>
<gene>
    <name type="primary">ETS2</name>
</gene>
<dbReference type="EMBL" id="BC126692">
    <property type="protein sequence ID" value="AAI26693.1"/>
    <property type="molecule type" value="mRNA"/>
</dbReference>
<dbReference type="RefSeq" id="NP_001073683.1">
    <property type="nucleotide sequence ID" value="NM_001080214.1"/>
</dbReference>
<dbReference type="SMR" id="A1A4L6"/>
<dbReference type="FunCoup" id="A1A4L6">
    <property type="interactions" value="520"/>
</dbReference>
<dbReference type="STRING" id="9913.ENSBTAP00000072496"/>
<dbReference type="PaxDb" id="9913-ENSBTAP00000012144"/>
<dbReference type="GeneID" id="281148"/>
<dbReference type="KEGG" id="bta:281148"/>
<dbReference type="CTD" id="2114"/>
<dbReference type="VEuPathDB" id="HostDB:ENSBTAG00000009214"/>
<dbReference type="eggNOG" id="KOG3806">
    <property type="taxonomic scope" value="Eukaryota"/>
</dbReference>
<dbReference type="InParanoid" id="A1A4L6"/>
<dbReference type="OMA" id="DFGIRNM"/>
<dbReference type="OrthoDB" id="10067219at2759"/>
<dbReference type="Reactome" id="R-BTA-2559585">
    <property type="pathway name" value="Oncogene Induced Senescence"/>
</dbReference>
<dbReference type="Proteomes" id="UP000009136">
    <property type="component" value="Chromosome 1"/>
</dbReference>
<dbReference type="Bgee" id="ENSBTAG00000009214">
    <property type="expression patterns" value="Expressed in infraspinatus muscle and 104 other cell types or tissues"/>
</dbReference>
<dbReference type="GO" id="GO:0005634">
    <property type="term" value="C:nucleus"/>
    <property type="evidence" value="ECO:0000318"/>
    <property type="project" value="GO_Central"/>
</dbReference>
<dbReference type="GO" id="GO:0000981">
    <property type="term" value="F:DNA-binding transcription factor activity, RNA polymerase II-specific"/>
    <property type="evidence" value="ECO:0000318"/>
    <property type="project" value="GO_Central"/>
</dbReference>
<dbReference type="GO" id="GO:0043565">
    <property type="term" value="F:sequence-specific DNA binding"/>
    <property type="evidence" value="ECO:0007669"/>
    <property type="project" value="InterPro"/>
</dbReference>
<dbReference type="GO" id="GO:0030154">
    <property type="term" value="P:cell differentiation"/>
    <property type="evidence" value="ECO:0000318"/>
    <property type="project" value="GO_Central"/>
</dbReference>
<dbReference type="GO" id="GO:0006357">
    <property type="term" value="P:regulation of transcription by RNA polymerase II"/>
    <property type="evidence" value="ECO:0000318"/>
    <property type="project" value="GO_Central"/>
</dbReference>
<dbReference type="CDD" id="cd08543">
    <property type="entry name" value="SAM_PNT-ETS-2"/>
    <property type="match status" value="1"/>
</dbReference>
<dbReference type="FunFam" id="1.10.10.10:FF:000097">
    <property type="entry name" value="Protein c-ets-1 isoform 1"/>
    <property type="match status" value="1"/>
</dbReference>
<dbReference type="FunFam" id="1.10.150.50:FF:000014">
    <property type="entry name" value="Protein c-ets-1 isoform 1"/>
    <property type="match status" value="1"/>
</dbReference>
<dbReference type="Gene3D" id="1.10.150.50">
    <property type="entry name" value="Transcription Factor, Ets-1"/>
    <property type="match status" value="1"/>
</dbReference>
<dbReference type="Gene3D" id="1.10.10.10">
    <property type="entry name" value="Winged helix-like DNA-binding domain superfamily/Winged helix DNA-binding domain"/>
    <property type="match status" value="1"/>
</dbReference>
<dbReference type="InterPro" id="IPR045688">
    <property type="entry name" value="Ets1_N_flank"/>
</dbReference>
<dbReference type="InterPro" id="IPR000418">
    <property type="entry name" value="Ets_dom"/>
</dbReference>
<dbReference type="InterPro" id="IPR046328">
    <property type="entry name" value="ETS_fam"/>
</dbReference>
<dbReference type="InterPro" id="IPR003118">
    <property type="entry name" value="Pointed_dom"/>
</dbReference>
<dbReference type="InterPro" id="IPR013761">
    <property type="entry name" value="SAM/pointed_sf"/>
</dbReference>
<dbReference type="InterPro" id="IPR016311">
    <property type="entry name" value="Transform_prot_C-ets"/>
</dbReference>
<dbReference type="InterPro" id="IPR027276">
    <property type="entry name" value="Transform_prot_C-ets-2"/>
</dbReference>
<dbReference type="InterPro" id="IPR036388">
    <property type="entry name" value="WH-like_DNA-bd_sf"/>
</dbReference>
<dbReference type="InterPro" id="IPR036390">
    <property type="entry name" value="WH_DNA-bd_sf"/>
</dbReference>
<dbReference type="PANTHER" id="PTHR11849">
    <property type="entry name" value="ETS"/>
    <property type="match status" value="1"/>
</dbReference>
<dbReference type="PANTHER" id="PTHR11849:SF188">
    <property type="entry name" value="PROTEIN C-ETS-2"/>
    <property type="match status" value="1"/>
</dbReference>
<dbReference type="Pfam" id="PF00178">
    <property type="entry name" value="Ets"/>
    <property type="match status" value="1"/>
</dbReference>
<dbReference type="Pfam" id="PF19525">
    <property type="entry name" value="Ets1_N_flank"/>
    <property type="match status" value="1"/>
</dbReference>
<dbReference type="Pfam" id="PF02198">
    <property type="entry name" value="SAM_PNT"/>
    <property type="match status" value="1"/>
</dbReference>
<dbReference type="PIRSF" id="PIRSF501032">
    <property type="entry name" value="C-ets-2"/>
    <property type="match status" value="1"/>
</dbReference>
<dbReference type="PIRSF" id="PIRSF001698">
    <property type="entry name" value="Transforming_factor_C-ets"/>
    <property type="match status" value="1"/>
</dbReference>
<dbReference type="PRINTS" id="PR00454">
    <property type="entry name" value="ETSDOMAIN"/>
</dbReference>
<dbReference type="SMART" id="SM00413">
    <property type="entry name" value="ETS"/>
    <property type="match status" value="1"/>
</dbReference>
<dbReference type="SMART" id="SM00251">
    <property type="entry name" value="SAM_PNT"/>
    <property type="match status" value="1"/>
</dbReference>
<dbReference type="SUPFAM" id="SSF47769">
    <property type="entry name" value="SAM/Pointed domain"/>
    <property type="match status" value="1"/>
</dbReference>
<dbReference type="SUPFAM" id="SSF46785">
    <property type="entry name" value="Winged helix' DNA-binding domain"/>
    <property type="match status" value="1"/>
</dbReference>
<dbReference type="PROSITE" id="PS00345">
    <property type="entry name" value="ETS_DOMAIN_1"/>
    <property type="match status" value="1"/>
</dbReference>
<dbReference type="PROSITE" id="PS00346">
    <property type="entry name" value="ETS_DOMAIN_2"/>
    <property type="match status" value="1"/>
</dbReference>
<dbReference type="PROSITE" id="PS50061">
    <property type="entry name" value="ETS_DOMAIN_3"/>
    <property type="match status" value="1"/>
</dbReference>
<dbReference type="PROSITE" id="PS51433">
    <property type="entry name" value="PNT"/>
    <property type="match status" value="1"/>
</dbReference>
<sequence>MNDFGIKNMDQVAPVASSYRGTLKRQAAFDTFDGSLLAVFPSLNEEQTLQEVPTGLDSISHDSANCELPLLTPCSKAVMSQALKATFSGFKKEQRRLGIPKNPWLWTEQQVCQWLLWATNEFSLVDVNLQRFGMTGQVLCNLGKERFLELAPDFVGDILWEHLEQMIKENQEKNEDQYEENSHLNSVPHWINSNSLGFGVEQAPYGMQTQSYPKGGLLDGLCPASSAPSTLGPEQDFQMFPKARLNTVSVNYCSVGQDFPAGSLNLLSSASGKPRDHDSAETGGDSFESSESLLQSWNSQSSLLDVQRVPSFESFEDDCSQSLGLSKPTMSFKDYIQDRSDPVEQGKPVIPAAVLAGFTGSGPIQLWQFLLELLSDKSCQSFISWTGDGWEFKLADPDEVARRWGKRKNKPKMNYEKLSRGLRYYYDKNIIHKTSGKRYVYRFVCDLQNLLGFTPEELHAILGVQPDTED</sequence>